<comment type="function">
    <text evidence="14 15 18 19">Glycosyltransferase forming with EXT1 the heterodimeric heparan sulfate polymerase which catalyzes the elongation of the heparan sulfate glycan backbone (PubMed:22660413, PubMed:36402845, PubMed:36593275). Glycan backbone extension consists in the alternating transfer of (1-&gt;4)-beta-D-GlcA and (1-&gt;4)-alpha-D-GlcNAc residues from their respective UDP-sugar donors. Both EXT1 and EXT2 are required for the full activity of the polymerase since EXT1 bears the N-acetylglucosaminyl-proteoglycan 4-beta-glucuronosyltransferase activity within the complex while EXT2 carries the glucuronosyl-N-acetylglucosaminyl-proteoglycan 4-alpha-N-acetylglucosaminyltransferase activity (PubMed:36402845, PubMed:36593275). Heparan sulfate proteoglycans are ubiquitous components of the extracellular matrix and play an important role in tissue homeostasis and signaling (PubMed:19344451, PubMed:22660413).</text>
</comment>
<comment type="catalytic activity">
    <reaction evidence="18 19">
        <text>3-O-{[(1-&gt;4)-beta-D-GlcA-(1-&gt;4)-alpha-D-GlcNAc](n)-(1-&gt;4)-beta-D-GlcA-(1-&gt;3)-beta-D-Gal-(1-&gt;3)-beta-D-Gal-(1-&gt;4)-beta-D-Xyl}-L-seryl-[protein] + UDP-N-acetyl-alpha-D-glucosamine = 3-O-{alpha-D-GlcNAc-[(1-&gt;4)-beta-D-GlcA-(1-&gt;4)-alpha-D-GlcNAc](n)-(1-&gt;4)-beta-D-GlcA-(1-&gt;3)-beta-D-Gal-(1-&gt;3)-beta-D-Gal-(1-&gt;4)-beta-D-Xyl}-L-seryl-[protein] + UDP + H(+)</text>
        <dbReference type="Rhea" id="RHEA:16213"/>
        <dbReference type="Rhea" id="RHEA-COMP:12621"/>
        <dbReference type="Rhea" id="RHEA-COMP:12623"/>
        <dbReference type="ChEBI" id="CHEBI:15378"/>
        <dbReference type="ChEBI" id="CHEBI:57705"/>
        <dbReference type="ChEBI" id="CHEBI:58223"/>
        <dbReference type="ChEBI" id="CHEBI:132415"/>
        <dbReference type="ChEBI" id="CHEBI:132416"/>
        <dbReference type="EC" id="2.4.1.224"/>
    </reaction>
    <physiologicalReaction direction="left-to-right" evidence="19">
        <dbReference type="Rhea" id="RHEA:16214"/>
    </physiologicalReaction>
</comment>
<comment type="cofactor">
    <cofactor evidence="19">
        <name>Mn(2+)</name>
        <dbReference type="ChEBI" id="CHEBI:29035"/>
    </cofactor>
</comment>
<comment type="pathway">
    <text evidence="18 19">Protein modification; protein glycosylation.</text>
</comment>
<comment type="subunit">
    <text evidence="6 7 13 17 18 19">Part of the heparan sulfate polymerase, a dimeric complex composed of EXT1 and EXT2 (PubMed:10679296, PubMed:36402845, PubMed:36593275). Could also form homooligomeric complexes (PubMed:10679296). Interacts with NDST1 (PubMed:18337501, PubMed:35137078). Interacts with GALNT5 (PubMed:10545594).</text>
</comment>
<comment type="interaction">
    <interactant intactId="EBI-1047761">
        <id>Q93063</id>
    </interactant>
    <interactant intactId="EBI-1046007">
        <id>Q16394</id>
        <label>EXT1</label>
    </interactant>
    <organismsDiffer>false</organismsDiffer>
    <experiments>9</experiments>
</comment>
<comment type="subcellular location">
    <subcellularLocation>
        <location evidence="7">Golgi apparatus membrane</location>
        <topology evidence="3">Single-pass type II membrane protein</topology>
    </subcellularLocation>
    <subcellularLocation>
        <location evidence="17">Golgi apparatus</location>
        <location evidence="17">cis-Golgi network membrane</location>
        <topology evidence="3">Single-pass type II membrane protein</topology>
    </subcellularLocation>
    <subcellularLocation>
        <location evidence="7">Endoplasmic reticulum membrane</location>
        <topology evidence="3">Single-pass type II membrane protein</topology>
    </subcellularLocation>
    <subcellularLocation>
        <location evidence="1">Secreted</location>
    </subcellularLocation>
    <text evidence="7">The active heparan sulfate polymerase complex composed of EXT1 and EXT2 is localized to the Golgi apparatus. If both proteins are individually detected in the endoplasmic reticulum, the formation of the complex promotes their transport to the Golgi.</text>
</comment>
<comment type="alternative products">
    <event type="alternative splicing"/>
    <isoform>
        <id>Q93063-1</id>
        <name>1</name>
        <sequence type="displayed"/>
    </isoform>
    <isoform>
        <id>Q93063-2</id>
        <name>2</name>
        <sequence type="described" ref="VSP_001798"/>
    </isoform>
    <isoform>
        <id>Q93063-3</id>
        <name>3</name>
        <sequence type="described" ref="VSP_046053"/>
    </isoform>
</comment>
<comment type="tissue specificity">
    <text evidence="20">Widely expressed.</text>
</comment>
<comment type="PTM">
    <text evidence="18 19">N-glycosylated at Asn-637.</text>
</comment>
<comment type="PTM">
    <text evidence="1">A soluble form is generated by proteolytic processing.</text>
</comment>
<comment type="disease" evidence="4 5 7 8 9 10 11 12 14 21">
    <disease id="DI-01726">
        <name>Hereditary multiple exostoses 2</name>
        <acronym>EXT2</acronym>
        <description>EXT is a genetically heterogeneous bone disorder caused by genes segregating on human chromosomes 8, 11, and 19 and designated EXT1, EXT2 and EXT3 respectively. EXT is a dominantly inherited skeletal disorder primarily affecting endochondral bone during growth. The disease is characterized by formation of numerous cartilage-capped, benign bone tumors (osteocartilaginous exostoses or osteochondromas) that are often accompanied by skeletal deformities and short stature. In a small percentage of cases exostoses have exhibited malignant transformation resulting in an osteosarcoma or chondrosarcoma. Osteochondromas development can also occur as a sporadic event.</description>
        <dbReference type="MIM" id="133701"/>
    </disease>
    <text>The disease is caused by variants affecting the gene represented in this entry.</text>
</comment>
<comment type="disease" evidence="16">
    <disease id="DI-04595">
        <name>Seizures, scoliosis, and macrocephaly/microcephaly syndrome</name>
        <acronym>SSMS</acronym>
        <description>An autosomal recessive syndrome characterized by seizures, intellectual disability, hypotonia, scoliosis, macrocephaly, hypertelorism and renal dysfunction.</description>
        <dbReference type="MIM" id="616682"/>
    </disease>
    <text>The disease is caused by variants affecting the gene represented in this entry.</text>
</comment>
<comment type="similarity">
    <text evidence="25">Belongs to the glycosyltransferase 47 family.</text>
</comment>
<comment type="online information" name="Atlas of Genetics and Cytogenetics in Oncology and Haematology">
    <link uri="https://atlasgeneticsoncology.org/gene/213/EXT2"/>
</comment>
<organism>
    <name type="scientific">Homo sapiens</name>
    <name type="common">Human</name>
    <dbReference type="NCBI Taxonomy" id="9606"/>
    <lineage>
        <taxon>Eukaryota</taxon>
        <taxon>Metazoa</taxon>
        <taxon>Chordata</taxon>
        <taxon>Craniata</taxon>
        <taxon>Vertebrata</taxon>
        <taxon>Euteleostomi</taxon>
        <taxon>Mammalia</taxon>
        <taxon>Eutheria</taxon>
        <taxon>Euarchontoglires</taxon>
        <taxon>Primates</taxon>
        <taxon>Haplorrhini</taxon>
        <taxon>Catarrhini</taxon>
        <taxon>Hominidae</taxon>
        <taxon>Homo</taxon>
    </lineage>
</organism>
<dbReference type="EC" id="2.4.1.224" evidence="19"/>
<dbReference type="EMBL" id="U62740">
    <property type="protein sequence ID" value="AAB07008.1"/>
    <property type="molecule type" value="mRNA"/>
</dbReference>
<dbReference type="EMBL" id="U64511">
    <property type="protein sequence ID" value="AAC50764.1"/>
    <property type="molecule type" value="mRNA"/>
</dbReference>
<dbReference type="EMBL" id="U67368">
    <property type="protein sequence ID" value="AAC51219.1"/>
    <property type="molecule type" value="Genomic_DNA"/>
</dbReference>
<dbReference type="EMBL" id="U67356">
    <property type="protein sequence ID" value="AAC51219.1"/>
    <property type="status" value="JOINED"/>
    <property type="molecule type" value="Genomic_DNA"/>
</dbReference>
<dbReference type="EMBL" id="U67357">
    <property type="protein sequence ID" value="AAC51219.1"/>
    <property type="status" value="JOINED"/>
    <property type="molecule type" value="Genomic_DNA"/>
</dbReference>
<dbReference type="EMBL" id="U67358">
    <property type="protein sequence ID" value="AAC51219.1"/>
    <property type="status" value="JOINED"/>
    <property type="molecule type" value="Genomic_DNA"/>
</dbReference>
<dbReference type="EMBL" id="U67360">
    <property type="protein sequence ID" value="AAC51219.1"/>
    <property type="status" value="JOINED"/>
    <property type="molecule type" value="Genomic_DNA"/>
</dbReference>
<dbReference type="EMBL" id="U67361">
    <property type="protein sequence ID" value="AAC51219.1"/>
    <property type="status" value="JOINED"/>
    <property type="molecule type" value="Genomic_DNA"/>
</dbReference>
<dbReference type="EMBL" id="U67362">
    <property type="protein sequence ID" value="AAC51219.1"/>
    <property type="status" value="JOINED"/>
    <property type="molecule type" value="Genomic_DNA"/>
</dbReference>
<dbReference type="EMBL" id="U67363">
    <property type="protein sequence ID" value="AAC51219.1"/>
    <property type="status" value="JOINED"/>
    <property type="molecule type" value="Genomic_DNA"/>
</dbReference>
<dbReference type="EMBL" id="U67364">
    <property type="protein sequence ID" value="AAC51219.1"/>
    <property type="status" value="JOINED"/>
    <property type="molecule type" value="Genomic_DNA"/>
</dbReference>
<dbReference type="EMBL" id="U67365">
    <property type="protein sequence ID" value="AAC51219.1"/>
    <property type="status" value="JOINED"/>
    <property type="molecule type" value="Genomic_DNA"/>
</dbReference>
<dbReference type="EMBL" id="U67366">
    <property type="protein sequence ID" value="AAC51219.1"/>
    <property type="status" value="JOINED"/>
    <property type="molecule type" value="Genomic_DNA"/>
</dbReference>
<dbReference type="EMBL" id="U67367">
    <property type="protein sequence ID" value="AAC51219.1"/>
    <property type="status" value="JOINED"/>
    <property type="molecule type" value="Genomic_DNA"/>
</dbReference>
<dbReference type="EMBL" id="U72263">
    <property type="protein sequence ID" value="AAB62718.1"/>
    <property type="molecule type" value="mRNA"/>
</dbReference>
<dbReference type="EMBL" id="AK312375">
    <property type="protein sequence ID" value="BAG35293.1"/>
    <property type="molecule type" value="mRNA"/>
</dbReference>
<dbReference type="EMBL" id="BX648142">
    <property type="status" value="NOT_ANNOTATED_CDS"/>
    <property type="molecule type" value="mRNA"/>
</dbReference>
<dbReference type="EMBL" id="AC068457">
    <property type="status" value="NOT_ANNOTATED_CDS"/>
    <property type="molecule type" value="Genomic_DNA"/>
</dbReference>
<dbReference type="EMBL" id="AC103854">
    <property type="status" value="NOT_ANNOTATED_CDS"/>
    <property type="molecule type" value="Genomic_DNA"/>
</dbReference>
<dbReference type="EMBL" id="AC134775">
    <property type="status" value="NOT_ANNOTATED_CDS"/>
    <property type="molecule type" value="Genomic_DNA"/>
</dbReference>
<dbReference type="EMBL" id="CH471064">
    <property type="protein sequence ID" value="EAW68068.1"/>
    <property type="molecule type" value="Genomic_DNA"/>
</dbReference>
<dbReference type="EMBL" id="CH471064">
    <property type="protein sequence ID" value="EAW68070.1"/>
    <property type="molecule type" value="Genomic_DNA"/>
</dbReference>
<dbReference type="EMBL" id="CH471064">
    <property type="protein sequence ID" value="EAW68071.1"/>
    <property type="molecule type" value="Genomic_DNA"/>
</dbReference>
<dbReference type="EMBL" id="BC010058">
    <property type="protein sequence ID" value="AAH10058.1"/>
    <property type="molecule type" value="mRNA"/>
</dbReference>
<dbReference type="CCDS" id="CCDS53619.1">
    <molecule id="Q93063-2"/>
</dbReference>
<dbReference type="CCDS" id="CCDS7908.1">
    <molecule id="Q93063-1"/>
</dbReference>
<dbReference type="RefSeq" id="NP_000392.3">
    <molecule id="Q93063-3"/>
    <property type="nucleotide sequence ID" value="NM_000401.3"/>
</dbReference>
<dbReference type="RefSeq" id="NP_001171554.1">
    <molecule id="Q93063-2"/>
    <property type="nucleotide sequence ID" value="NM_001178083.3"/>
</dbReference>
<dbReference type="RefSeq" id="NP_001376557.1">
    <molecule id="Q93063-1"/>
    <property type="nucleotide sequence ID" value="NM_001389628.1"/>
</dbReference>
<dbReference type="RefSeq" id="NP_001376559.1">
    <molecule id="Q93063-1"/>
    <property type="nucleotide sequence ID" value="NM_001389630.1"/>
</dbReference>
<dbReference type="RefSeq" id="NP_997005.1">
    <molecule id="Q93063-1"/>
    <property type="nucleotide sequence ID" value="NM_207122.2"/>
</dbReference>
<dbReference type="RefSeq" id="XP_047282486.1">
    <molecule id="Q93063-1"/>
    <property type="nucleotide sequence ID" value="XM_047426530.1"/>
</dbReference>
<dbReference type="RefSeq" id="XP_054223951.1">
    <molecule id="Q93063-1"/>
    <property type="nucleotide sequence ID" value="XM_054367976.1"/>
</dbReference>
<dbReference type="PDB" id="7SCH">
    <property type="method" value="EM"/>
    <property type="resolution" value="3.10 A"/>
    <property type="chains" value="B=46-718"/>
</dbReference>
<dbReference type="PDB" id="7SCJ">
    <property type="method" value="EM"/>
    <property type="resolution" value="3.40 A"/>
    <property type="chains" value="B=46-718"/>
</dbReference>
<dbReference type="PDB" id="7SCK">
    <property type="method" value="EM"/>
    <property type="resolution" value="2.80 A"/>
    <property type="chains" value="B=46-718"/>
</dbReference>
<dbReference type="PDB" id="7UQX">
    <property type="method" value="EM"/>
    <property type="resolution" value="3.30 A"/>
    <property type="chains" value="B=46-718"/>
</dbReference>
<dbReference type="PDB" id="7UQY">
    <property type="method" value="EM"/>
    <property type="resolution" value="3.00 A"/>
    <property type="chains" value="B=46-718"/>
</dbReference>
<dbReference type="PDB" id="7ZAY">
    <property type="method" value="EM"/>
    <property type="resolution" value="2.80 A"/>
    <property type="chains" value="B=47-718"/>
</dbReference>
<dbReference type="PDBsum" id="7SCH"/>
<dbReference type="PDBsum" id="7SCJ"/>
<dbReference type="PDBsum" id="7SCK"/>
<dbReference type="PDBsum" id="7UQX"/>
<dbReference type="PDBsum" id="7UQY"/>
<dbReference type="PDBsum" id="7ZAY"/>
<dbReference type="EMDB" id="EMD-14582"/>
<dbReference type="EMDB" id="EMD-25035"/>
<dbReference type="EMDB" id="EMD-25036"/>
<dbReference type="EMDB" id="EMD-25037"/>
<dbReference type="EMDB" id="EMD-26701"/>
<dbReference type="EMDB" id="EMD-26702"/>
<dbReference type="SMR" id="Q93063"/>
<dbReference type="BioGRID" id="108433">
    <property type="interactions" value="120"/>
</dbReference>
<dbReference type="ComplexPortal" id="CPX-8307">
    <property type="entry name" value="EXT1-EXT2 heparan sulfate biosynthesis complex"/>
</dbReference>
<dbReference type="CORUM" id="Q93063"/>
<dbReference type="FunCoup" id="Q93063">
    <property type="interactions" value="1828"/>
</dbReference>
<dbReference type="IntAct" id="Q93063">
    <property type="interactions" value="58"/>
</dbReference>
<dbReference type="MINT" id="Q93063"/>
<dbReference type="STRING" id="9606.ENSP00000379032"/>
<dbReference type="CAZy" id="GT47">
    <property type="family name" value="Glycosyltransferase Family 47"/>
</dbReference>
<dbReference type="CAZy" id="GT64">
    <property type="family name" value="Glycosyltransferase Family 64"/>
</dbReference>
<dbReference type="GlyCosmos" id="Q93063">
    <property type="glycosylation" value="2 sites, No reported glycans"/>
</dbReference>
<dbReference type="GlyGen" id="Q93063">
    <property type="glycosylation" value="2 sites, 2 N-linked glycans (2 sites)"/>
</dbReference>
<dbReference type="iPTMnet" id="Q93063"/>
<dbReference type="PhosphoSitePlus" id="Q93063"/>
<dbReference type="SwissPalm" id="Q93063"/>
<dbReference type="BioMuta" id="EXT2"/>
<dbReference type="DMDM" id="3023739"/>
<dbReference type="jPOST" id="Q93063"/>
<dbReference type="MassIVE" id="Q93063"/>
<dbReference type="PaxDb" id="9606-ENSP00000379032"/>
<dbReference type="PeptideAtlas" id="Q93063"/>
<dbReference type="ProteomicsDB" id="11685"/>
<dbReference type="ProteomicsDB" id="75696">
    <molecule id="Q93063-1"/>
</dbReference>
<dbReference type="ProteomicsDB" id="75697">
    <molecule id="Q93063-2"/>
</dbReference>
<dbReference type="Pumba" id="Q93063"/>
<dbReference type="Antibodypedia" id="26103">
    <property type="antibodies" value="230 antibodies from 30 providers"/>
</dbReference>
<dbReference type="DNASU" id="2132"/>
<dbReference type="Ensembl" id="ENST00000343631.4">
    <molecule id="Q93063-1"/>
    <property type="protein sequence ID" value="ENSP00000342656.3"/>
    <property type="gene ID" value="ENSG00000151348.16"/>
</dbReference>
<dbReference type="Ensembl" id="ENST00000358681.8">
    <molecule id="Q93063-2"/>
    <property type="protein sequence ID" value="ENSP00000351509.4"/>
    <property type="gene ID" value="ENSG00000151348.16"/>
</dbReference>
<dbReference type="Ensembl" id="ENST00000395673.8">
    <molecule id="Q93063-1"/>
    <property type="protein sequence ID" value="ENSP00000379032.4"/>
    <property type="gene ID" value="ENSG00000151348.16"/>
</dbReference>
<dbReference type="Ensembl" id="ENST00000533608.7">
    <molecule id="Q93063-1"/>
    <property type="protein sequence ID" value="ENSP00000431173.2"/>
    <property type="gene ID" value="ENSG00000151348.16"/>
</dbReference>
<dbReference type="Ensembl" id="ENST00000682993.1">
    <molecule id="Q93063-1"/>
    <property type="protein sequence ID" value="ENSP00000507580.1"/>
    <property type="gene ID" value="ENSG00000151348.16"/>
</dbReference>
<dbReference type="Ensembl" id="ENST00000683000.1">
    <molecule id="Q93063-1"/>
    <property type="protein sequence ID" value="ENSP00000508361.1"/>
    <property type="gene ID" value="ENSG00000151348.16"/>
</dbReference>
<dbReference type="GeneID" id="2132"/>
<dbReference type="KEGG" id="hsa:2132"/>
<dbReference type="MANE-Select" id="ENST00000533608.7">
    <property type="protein sequence ID" value="ENSP00000431173.2"/>
    <property type="RefSeq nucleotide sequence ID" value="NM_207122.2"/>
    <property type="RefSeq protein sequence ID" value="NP_997005.1"/>
</dbReference>
<dbReference type="UCSC" id="uc001mxz.4">
    <molecule id="Q93063-1"/>
    <property type="organism name" value="human"/>
</dbReference>
<dbReference type="AGR" id="HGNC:3513"/>
<dbReference type="CTD" id="2132"/>
<dbReference type="DisGeNET" id="2132"/>
<dbReference type="GeneCards" id="EXT2"/>
<dbReference type="GeneReviews" id="EXT2"/>
<dbReference type="HGNC" id="HGNC:3513">
    <property type="gene designation" value="EXT2"/>
</dbReference>
<dbReference type="HPA" id="ENSG00000151348">
    <property type="expression patterns" value="Low tissue specificity"/>
</dbReference>
<dbReference type="MalaCards" id="EXT2"/>
<dbReference type="MIM" id="133701">
    <property type="type" value="phenotype"/>
</dbReference>
<dbReference type="MIM" id="601224">
    <property type="type" value="phenotype"/>
</dbReference>
<dbReference type="MIM" id="608210">
    <property type="type" value="gene"/>
</dbReference>
<dbReference type="MIM" id="616682">
    <property type="type" value="phenotype"/>
</dbReference>
<dbReference type="neXtProt" id="NX_Q93063"/>
<dbReference type="OpenTargets" id="ENSG00000151348"/>
<dbReference type="Orphanet" id="321">
    <property type="disease" value="Multiple osteochondromas"/>
</dbReference>
<dbReference type="Orphanet" id="52022">
    <property type="disease" value="Potocki-Shaffer syndrome"/>
</dbReference>
<dbReference type="Orphanet" id="466926">
    <property type="disease" value="Seizures-scoliosis-macrocephaly syndrome"/>
</dbReference>
<dbReference type="PharmGKB" id="PA27925"/>
<dbReference type="VEuPathDB" id="HostDB:ENSG00000151348"/>
<dbReference type="eggNOG" id="KOG1022">
    <property type="taxonomic scope" value="Eukaryota"/>
</dbReference>
<dbReference type="GeneTree" id="ENSGT00940000156620"/>
<dbReference type="HOGENOM" id="CLU_013906_4_1_1"/>
<dbReference type="InParanoid" id="Q93063"/>
<dbReference type="OMA" id="NCTFWDC"/>
<dbReference type="OrthoDB" id="5954868at2759"/>
<dbReference type="PAN-GO" id="Q93063">
    <property type="GO annotations" value="2 GO annotations based on evolutionary models"/>
</dbReference>
<dbReference type="PhylomeDB" id="Q93063"/>
<dbReference type="TreeFam" id="TF314231"/>
<dbReference type="BioCyc" id="MetaCyc:HS07726-MONOMER"/>
<dbReference type="BRENDA" id="2.4.1.224">
    <property type="organism ID" value="2681"/>
</dbReference>
<dbReference type="BRENDA" id="2.4.1.225">
    <property type="organism ID" value="2681"/>
</dbReference>
<dbReference type="PathwayCommons" id="Q93063"/>
<dbReference type="Reactome" id="R-HSA-2022928">
    <property type="pathway name" value="HS-GAG biosynthesis"/>
</dbReference>
<dbReference type="Reactome" id="R-HSA-3656237">
    <property type="pathway name" value="Defective EXT2 causes exostoses 2"/>
</dbReference>
<dbReference type="Reactome" id="R-HSA-3656253">
    <property type="pathway name" value="Defective EXT1 causes exostoses 1, TRPS2 and CHDS"/>
</dbReference>
<dbReference type="SignaLink" id="Q93063"/>
<dbReference type="SIGNOR" id="Q93063"/>
<dbReference type="UniPathway" id="UPA00378"/>
<dbReference type="BioGRID-ORCS" id="2132">
    <property type="hits" value="86 hits in 1164 CRISPR screens"/>
</dbReference>
<dbReference type="ChiTaRS" id="EXT2">
    <property type="organism name" value="human"/>
</dbReference>
<dbReference type="GeneWiki" id="EXT2_(gene)"/>
<dbReference type="GenomeRNAi" id="2132"/>
<dbReference type="Pharos" id="Q93063">
    <property type="development level" value="Tbio"/>
</dbReference>
<dbReference type="PRO" id="PR:Q93063"/>
<dbReference type="Proteomes" id="UP000005640">
    <property type="component" value="Chromosome 11"/>
</dbReference>
<dbReference type="RNAct" id="Q93063">
    <property type="molecule type" value="protein"/>
</dbReference>
<dbReference type="Bgee" id="ENSG00000151348">
    <property type="expression patterns" value="Expressed in stromal cell of endometrium and 187 other cell types or tissues"/>
</dbReference>
<dbReference type="GO" id="GO:1902494">
    <property type="term" value="C:catalytic complex"/>
    <property type="evidence" value="ECO:0000314"/>
    <property type="project" value="UniProtKB"/>
</dbReference>
<dbReference type="GO" id="GO:0005783">
    <property type="term" value="C:endoplasmic reticulum"/>
    <property type="evidence" value="ECO:0000314"/>
    <property type="project" value="UniProtKB"/>
</dbReference>
<dbReference type="GO" id="GO:0070062">
    <property type="term" value="C:extracellular exosome"/>
    <property type="evidence" value="ECO:0007005"/>
    <property type="project" value="UniProtKB"/>
</dbReference>
<dbReference type="GO" id="GO:0005794">
    <property type="term" value="C:Golgi apparatus"/>
    <property type="evidence" value="ECO:0000314"/>
    <property type="project" value="HPA"/>
</dbReference>
<dbReference type="GO" id="GO:0000139">
    <property type="term" value="C:Golgi membrane"/>
    <property type="evidence" value="ECO:0000304"/>
    <property type="project" value="Reactome"/>
</dbReference>
<dbReference type="GO" id="GO:0016020">
    <property type="term" value="C:membrane"/>
    <property type="evidence" value="ECO:0007005"/>
    <property type="project" value="UniProtKB"/>
</dbReference>
<dbReference type="GO" id="GO:0043541">
    <property type="term" value="C:UDP-N-acetylglucosamine transferase complex"/>
    <property type="evidence" value="ECO:0000314"/>
    <property type="project" value="BHF-UCL"/>
</dbReference>
<dbReference type="GO" id="GO:0050508">
    <property type="term" value="F:glucuronosyl-N-acetylglucosaminyl-proteoglycan 4-alpha-N-acetylglucosaminyltransferase activity"/>
    <property type="evidence" value="ECO:0000314"/>
    <property type="project" value="UniProtKB"/>
</dbReference>
<dbReference type="GO" id="GO:0015020">
    <property type="term" value="F:glucuronosyltransferase activity"/>
    <property type="evidence" value="ECO:0000314"/>
    <property type="project" value="BHF-UCL"/>
</dbReference>
<dbReference type="GO" id="GO:0016757">
    <property type="term" value="F:glycosyltransferase activity"/>
    <property type="evidence" value="ECO:0000314"/>
    <property type="project" value="BHF-UCL"/>
</dbReference>
<dbReference type="GO" id="GO:0042328">
    <property type="term" value="F:heparan sulfate N-acetylglucosaminyltransferase activity"/>
    <property type="evidence" value="ECO:0000303"/>
    <property type="project" value="BHF-UCL"/>
</dbReference>
<dbReference type="GO" id="GO:0046872">
    <property type="term" value="F:metal ion binding"/>
    <property type="evidence" value="ECO:0007669"/>
    <property type="project" value="UniProtKB-KW"/>
</dbReference>
<dbReference type="GO" id="GO:0050509">
    <property type="term" value="F:N-acetylglucosaminyl-proteoglycan 4-beta-glucuronosyltransferase activity"/>
    <property type="evidence" value="ECO:0000303"/>
    <property type="project" value="BHF-UCL"/>
</dbReference>
<dbReference type="GO" id="GO:0046982">
    <property type="term" value="F:protein heterodimerization activity"/>
    <property type="evidence" value="ECO:0000353"/>
    <property type="project" value="BHF-UCL"/>
</dbReference>
<dbReference type="GO" id="GO:0044344">
    <property type="term" value="P:cellular response to fibroblast growth factor stimulus"/>
    <property type="evidence" value="ECO:0007669"/>
    <property type="project" value="Ensembl"/>
</dbReference>
<dbReference type="GO" id="GO:0002062">
    <property type="term" value="P:chondrocyte differentiation"/>
    <property type="evidence" value="ECO:0007669"/>
    <property type="project" value="Ensembl"/>
</dbReference>
<dbReference type="GO" id="GO:0060350">
    <property type="term" value="P:endochondral bone morphogenesis"/>
    <property type="evidence" value="ECO:0007669"/>
    <property type="project" value="Ensembl"/>
</dbReference>
<dbReference type="GO" id="GO:0042044">
    <property type="term" value="P:fluid transport"/>
    <property type="evidence" value="ECO:0007669"/>
    <property type="project" value="Ensembl"/>
</dbReference>
<dbReference type="GO" id="GO:0010467">
    <property type="term" value="P:gene expression"/>
    <property type="evidence" value="ECO:0007669"/>
    <property type="project" value="Ensembl"/>
</dbReference>
<dbReference type="GO" id="GO:0006024">
    <property type="term" value="P:glycosaminoglycan biosynthetic process"/>
    <property type="evidence" value="ECO:0000314"/>
    <property type="project" value="BHF-UCL"/>
</dbReference>
<dbReference type="GO" id="GO:0060047">
    <property type="term" value="P:heart contraction"/>
    <property type="evidence" value="ECO:0007669"/>
    <property type="project" value="Ensembl"/>
</dbReference>
<dbReference type="GO" id="GO:0015012">
    <property type="term" value="P:heparan sulfate proteoglycan biosynthetic process"/>
    <property type="evidence" value="ECO:0000314"/>
    <property type="project" value="UniProtKB"/>
</dbReference>
<dbReference type="GO" id="GO:0030210">
    <property type="term" value="P:heparin proteoglycan biosynthetic process"/>
    <property type="evidence" value="ECO:0007669"/>
    <property type="project" value="Ensembl"/>
</dbReference>
<dbReference type="GO" id="GO:0001707">
    <property type="term" value="P:mesoderm formation"/>
    <property type="evidence" value="ECO:0007669"/>
    <property type="project" value="Ensembl"/>
</dbReference>
<dbReference type="GO" id="GO:0050891">
    <property type="term" value="P:multicellular organismal-level water homeostasis"/>
    <property type="evidence" value="ECO:0007669"/>
    <property type="project" value="Ensembl"/>
</dbReference>
<dbReference type="GO" id="GO:0001503">
    <property type="term" value="P:ossification"/>
    <property type="evidence" value="ECO:0000315"/>
    <property type="project" value="BHF-UCL"/>
</dbReference>
<dbReference type="GO" id="GO:0000271">
    <property type="term" value="P:polysaccharide biosynthetic process"/>
    <property type="evidence" value="ECO:0000314"/>
    <property type="project" value="BHF-UCL"/>
</dbReference>
<dbReference type="GO" id="GO:0006487">
    <property type="term" value="P:protein N-linked glycosylation"/>
    <property type="evidence" value="ECO:0007669"/>
    <property type="project" value="Ensembl"/>
</dbReference>
<dbReference type="GO" id="GO:0008217">
    <property type="term" value="P:regulation of blood pressure"/>
    <property type="evidence" value="ECO:0007669"/>
    <property type="project" value="Ensembl"/>
</dbReference>
<dbReference type="GO" id="GO:0055078">
    <property type="term" value="P:sodium ion homeostasis"/>
    <property type="evidence" value="ECO:0007669"/>
    <property type="project" value="Ensembl"/>
</dbReference>
<dbReference type="GO" id="GO:0051923">
    <property type="term" value="P:sulfation"/>
    <property type="evidence" value="ECO:0007669"/>
    <property type="project" value="Ensembl"/>
</dbReference>
<dbReference type="GO" id="GO:0042311">
    <property type="term" value="P:vasodilation"/>
    <property type="evidence" value="ECO:0007669"/>
    <property type="project" value="Ensembl"/>
</dbReference>
<dbReference type="FunFam" id="3.90.550.10:FF:000035">
    <property type="entry name" value="Putative Exostosin-2"/>
    <property type="match status" value="1"/>
</dbReference>
<dbReference type="Gene3D" id="3.90.550.10">
    <property type="entry name" value="Spore Coat Polysaccharide Biosynthesis Protein SpsA, Chain A"/>
    <property type="match status" value="1"/>
</dbReference>
<dbReference type="InterPro" id="IPR004263">
    <property type="entry name" value="Exostosin"/>
</dbReference>
<dbReference type="InterPro" id="IPR040911">
    <property type="entry name" value="Exostosin_GT47"/>
</dbReference>
<dbReference type="InterPro" id="IPR015338">
    <property type="entry name" value="GT64_dom"/>
</dbReference>
<dbReference type="InterPro" id="IPR029044">
    <property type="entry name" value="Nucleotide-diphossugar_trans"/>
</dbReference>
<dbReference type="PANTHER" id="PTHR48261">
    <property type="entry name" value="ACETYLGLUCOSAMINYLTRANSFERASE"/>
    <property type="match status" value="1"/>
</dbReference>
<dbReference type="PANTHER" id="PTHR48261:SF5">
    <property type="entry name" value="EXOSTOSIN GLYCOSYLTRANSFERASE 2"/>
    <property type="match status" value="1"/>
</dbReference>
<dbReference type="Pfam" id="PF03016">
    <property type="entry name" value="Exostosin_GT47"/>
    <property type="match status" value="1"/>
</dbReference>
<dbReference type="Pfam" id="PF09258">
    <property type="entry name" value="Glyco_transf_64"/>
    <property type="match status" value="1"/>
</dbReference>
<dbReference type="SUPFAM" id="SSF53448">
    <property type="entry name" value="Nucleotide-diphospho-sugar transferases"/>
    <property type="match status" value="1"/>
</dbReference>
<accession>Q93063</accession>
<accession>B2R5Z6</accession>
<accession>C9JU51</accession>
<accession>J3KPT2</accession>
<accession>O15288</accession>
<protein>
    <recommendedName>
        <fullName evidence="25">Exostosin-2</fullName>
        <ecNumber evidence="19">2.4.1.224</ecNumber>
    </recommendedName>
    <alternativeName>
        <fullName evidence="27">Exostosin glycosyltransferase 2</fullName>
    </alternativeName>
    <alternativeName>
        <fullName evidence="23">Glucuronosyl-N-acetylglucosaminyl-proteoglycan 4-alpha-N-acetylglucosaminyltransferase</fullName>
    </alternativeName>
    <alternativeName>
        <fullName evidence="23">Heparan sulfate co-polymerase subunit EXT1</fullName>
    </alternativeName>
    <alternativeName>
        <fullName evidence="24">Multiple exostoses protein 2</fullName>
    </alternativeName>
</protein>
<sequence length="718" mass="82255">MCASVKYNIRGPALIPRMKTKHRIYYITLFSIVLLGLIATGMFQFWPHSIESSNDWNVEKRSIRDVPVVRLPADSPIPERGDLSCRMHTCFDVYRCGFNPKNKIKVYIYALKKYVDDFGVSVSNTISREYNELLMAISDSDYYTDDINRACLFVPSIDVLNQNTLRIKETAQAMAQLSRWDRGTNHLLFNMLPGGPPDYNTALDVPRDRALLAGGGFSTWTYRQGYDVSIPVYSPLSAEVDLPEKGPGPRQYFLLSSQVGLHPEYREDLEALQVKHGESVLVLDKCTNLSEGVLSVRKRCHKHQVFDYPQVLQEATFCVVLRGARLGQAVLSDVLQAGCVPVVIADSYILPFSEVLDWKRASVVVPEEKMSDVYSILQSIPQRQIEEMQRQARWFWEAYFQSIKAIALATLQIINDRIYPYAAISYEEWNDPPAVKWGSVSNPLFLPLIPPQSQGFTAIVLTYDRVESLFRVITEVSKVPSLSKLLVVWNNQNKNPPEDSLWPKIRVPLKVVRTAENKLSNRFFPYDEIETEAVLAIDDDIIMLTSDELQFGYEVWREFPDRLVGYPGRLHLWDHEMNKWKYESEWTNEVSMVLTGAAFYHKYFNYLYTYKMPGDIKNWVDAHMNCEDIAMNFLVANVTGKAVIKVTPRKKFKCPECTAIDGLSLDQTHMVERSECINKFASVFGTMPLKVVEHRADPVLYKDDFPEKLKSFPNIGSL</sequence>
<feature type="chain" id="PRO_0000149651" description="Exostosin-2">
    <location>
        <begin position="1"/>
        <end position="718"/>
    </location>
</feature>
<feature type="topological domain" description="Cytoplasmic" evidence="3">
    <location>
        <begin position="1"/>
        <end position="25"/>
    </location>
</feature>
<feature type="transmembrane region" description="Helical; Signal-anchor for type II membrane protein" evidence="3">
    <location>
        <begin position="26"/>
        <end position="46"/>
    </location>
</feature>
<feature type="topological domain" description="Lumenal" evidence="3">
    <location>
        <begin position="47"/>
        <end position="718"/>
    </location>
</feature>
<feature type="binding site" evidence="19 29 30 31">
    <location>
        <position position="461"/>
    </location>
    <ligand>
        <name>UDP</name>
        <dbReference type="ChEBI" id="CHEBI:58223"/>
    </ligand>
</feature>
<feature type="binding site" evidence="19 30">
    <location>
        <position position="465"/>
    </location>
    <ligand>
        <name>UDP</name>
        <dbReference type="ChEBI" id="CHEBI:58223"/>
    </ligand>
</feature>
<feature type="binding site" evidence="2">
    <location>
        <position position="465"/>
    </location>
    <ligand>
        <name>UDP-N-acetyl-alpha-D-glucosamine</name>
        <dbReference type="ChEBI" id="CHEBI:57705"/>
    </ligand>
</feature>
<feature type="binding site" evidence="19 31">
    <location>
        <position position="490"/>
    </location>
    <ligand>
        <name>UDP</name>
        <dbReference type="ChEBI" id="CHEBI:58223"/>
    </ligand>
</feature>
<feature type="binding site" evidence="2">
    <location>
        <position position="490"/>
    </location>
    <ligand>
        <name>UDP-N-acetyl-alpha-D-glucosamine</name>
        <dbReference type="ChEBI" id="CHEBI:57705"/>
    </ligand>
</feature>
<feature type="binding site" evidence="19 29 31">
    <location>
        <position position="517"/>
    </location>
    <ligand>
        <name>UDP</name>
        <dbReference type="ChEBI" id="CHEBI:58223"/>
    </ligand>
</feature>
<feature type="binding site" evidence="2">
    <location>
        <position position="517"/>
    </location>
    <ligand>
        <name>UDP-N-acetyl-alpha-D-glucosamine</name>
        <dbReference type="ChEBI" id="CHEBI:57705"/>
    </ligand>
</feature>
<feature type="binding site" evidence="2">
    <location>
        <position position="522"/>
    </location>
    <ligand>
        <name>UDP-N-acetyl-alpha-D-glucosamine</name>
        <dbReference type="ChEBI" id="CHEBI:57705"/>
    </ligand>
</feature>
<feature type="binding site" evidence="19 31">
    <location>
        <position position="538"/>
    </location>
    <ligand>
        <name>UDP</name>
        <dbReference type="ChEBI" id="CHEBI:58223"/>
    </ligand>
</feature>
<feature type="binding site" evidence="2">
    <location>
        <position position="538"/>
    </location>
    <ligand>
        <name>UDP-N-acetyl-alpha-D-glucosamine</name>
        <dbReference type="ChEBI" id="CHEBI:57705"/>
    </ligand>
</feature>
<feature type="binding site" evidence="19 30 31">
    <location>
        <position position="539"/>
    </location>
    <ligand>
        <name>UDP</name>
        <dbReference type="ChEBI" id="CHEBI:58223"/>
    </ligand>
</feature>
<feature type="binding site" evidence="2">
    <location>
        <position position="539"/>
    </location>
    <ligand>
        <name>UDP-N-acetyl-alpha-D-glucosamine</name>
        <dbReference type="ChEBI" id="CHEBI:57705"/>
    </ligand>
</feature>
<feature type="binding site" evidence="19 30">
    <location>
        <position position="540"/>
    </location>
    <ligand>
        <name>Mn(2+)</name>
        <dbReference type="ChEBI" id="CHEBI:29035"/>
        <note>catalytic</note>
    </ligand>
</feature>
<feature type="binding site" evidence="2">
    <location>
        <position position="540"/>
    </location>
    <ligand>
        <name>UDP-N-acetyl-alpha-D-glucosamine</name>
        <dbReference type="ChEBI" id="CHEBI:57705"/>
    </ligand>
</feature>
<feature type="binding site" evidence="26 30">
    <location>
        <position position="582"/>
    </location>
    <ligand>
        <name>a protein</name>
        <dbReference type="ChEBI" id="CHEBI:16541"/>
    </ligand>
    <ligandPart>
        <name>O(3)-(poly[(1-&gt;4)-beta-D-glucuronosyl-(1-&gt;4)-N-acetyl-alpha-D-glucosaminyl]-(1-&gt;4)-beta-D-glucuronosyl-(1-&gt;3)-beta-D-galactosyl-(1-&gt;3)-beta-D-galactosyl-(1-&gt;4)-beta-D-xylosyl)-L-serine residue</name>
        <dbReference type="ChEBI" id="CHEBI:132415"/>
    </ligandPart>
</feature>
<feature type="binding site" evidence="26 30">
    <location>
        <position position="584"/>
    </location>
    <ligand>
        <name>a protein</name>
        <dbReference type="ChEBI" id="CHEBI:16541"/>
    </ligand>
    <ligandPart>
        <name>O(3)-(poly[(1-&gt;4)-beta-D-glucuronosyl-(1-&gt;4)-N-acetyl-alpha-D-glucosaminyl]-(1-&gt;4)-beta-D-glucuronosyl-(1-&gt;3)-beta-D-galactosyl-(1-&gt;3)-beta-D-galactosyl-(1-&gt;4)-beta-D-xylosyl)-L-serine residue</name>
        <dbReference type="ChEBI" id="CHEBI:132415"/>
    </ligandPart>
</feature>
<feature type="binding site" evidence="2">
    <location>
        <position position="627"/>
    </location>
    <ligand>
        <name>UDP-N-acetyl-alpha-D-glucosamine</name>
        <dbReference type="ChEBI" id="CHEBI:57705"/>
    </ligand>
</feature>
<feature type="binding site" evidence="2">
    <location>
        <position position="628"/>
    </location>
    <ligand>
        <name>UDP-N-acetyl-alpha-D-glucosamine</name>
        <dbReference type="ChEBI" id="CHEBI:57705"/>
    </ligand>
</feature>
<feature type="binding site" evidence="26 30">
    <location>
        <position position="651"/>
    </location>
    <ligand>
        <name>a protein</name>
        <dbReference type="ChEBI" id="CHEBI:16541"/>
    </ligand>
    <ligandPart>
        <name>O(3)-(poly[(1-&gt;4)-beta-D-glucuronosyl-(1-&gt;4)-N-acetyl-alpha-D-glucosaminyl]-(1-&gt;4)-beta-D-glucuronosyl-(1-&gt;3)-beta-D-galactosyl-(1-&gt;3)-beta-D-galactosyl-(1-&gt;4)-beta-D-xylosyl)-L-serine residue</name>
        <dbReference type="ChEBI" id="CHEBI:132415"/>
    </ligandPart>
</feature>
<feature type="binding site" evidence="26 30">
    <location>
        <position position="653"/>
    </location>
    <ligand>
        <name>a protein</name>
        <dbReference type="ChEBI" id="CHEBI:16541"/>
    </ligand>
    <ligandPart>
        <name>O(3)-(poly[(1-&gt;4)-beta-D-glucuronosyl-(1-&gt;4)-N-acetyl-alpha-D-glucosaminyl]-(1-&gt;4)-beta-D-glucuronosyl-(1-&gt;3)-beta-D-galactosyl-(1-&gt;3)-beta-D-galactosyl-(1-&gt;4)-beta-D-xylosyl)-L-serine residue</name>
        <dbReference type="ChEBI" id="CHEBI:132415"/>
    </ligandPart>
</feature>
<feature type="binding site" evidence="2">
    <location>
        <position position="673"/>
    </location>
    <ligand>
        <name>UDP-N-acetyl-alpha-D-glucosamine</name>
        <dbReference type="ChEBI" id="CHEBI:57705"/>
    </ligand>
</feature>
<feature type="glycosylation site" description="N-linked (GlcNAc...) asparagine" evidence="3">
    <location>
        <position position="288"/>
    </location>
</feature>
<feature type="glycosylation site" description="N-linked (GlcNAc...) asparagine" evidence="18 19 28 29 30 31 32 33">
    <location>
        <position position="637"/>
    </location>
</feature>
<feature type="disulfide bond" evidence="18 19 28 29 30 31 32 33">
    <location>
        <begin position="85"/>
        <end position="90"/>
    </location>
</feature>
<feature type="disulfide bond" evidence="18 19 28 29 30 31 32 33">
    <location>
        <begin position="96"/>
        <end position="151"/>
    </location>
</feature>
<feature type="disulfide bond" evidence="18 33">
    <location>
        <begin position="286"/>
        <end position="300"/>
    </location>
</feature>
<feature type="disulfide bond" evidence="18 19 28 29 30 31 32 33">
    <location>
        <begin position="318"/>
        <end position="339"/>
    </location>
</feature>
<feature type="disulfide bond" evidence="18 19 28 29 30 31 32 33">
    <location>
        <begin position="626"/>
        <end position="676"/>
    </location>
</feature>
<feature type="splice variant" id="VSP_046053" description="In isoform 3." evidence="22">
    <original>M</original>
    <variation>MSCASGSGGGLRHPLRCQKPWDEECEEEAVCVIM</variation>
    <location>
        <position position="1"/>
    </location>
</feature>
<feature type="splice variant" id="VSP_001798" description="In isoform 2." evidence="25">
    <original>ARWFWEAYFQSIKAIALATL</original>
    <variation>LFMEPARRENWSAANHQMNSLIWPREQWDS</variation>
    <location>
        <begin position="392"/>
        <end position="411"/>
    </location>
</feature>
<feature type="sequence variant" id="VAR_033921" description="In dbSNP:rs4755779.">
    <original>M</original>
    <variation>V</variation>
    <location>
        <position position="42"/>
    </location>
</feature>
<feature type="sequence variant" id="VAR_012823" description="In EXT2." evidence="4">
    <original>C</original>
    <variation>R</variation>
    <location>
        <position position="85"/>
    </location>
</feature>
<feature type="sequence variant" id="VAR_076469" description="In SSMS; decreased protein abundance; levels of the EXT2-interacting protein NDST1 are abolished in patient cells; dbSNP:rs140075817." evidence="16">
    <original>M</original>
    <variation>R</variation>
    <location>
        <position position="87"/>
    </location>
</feature>
<feature type="sequence variant" id="VAR_076470" description="In SSMS; decreased protein abundance; levels of the EXT2-interacting protein NDST1 are abolished in patient cells; dbSNP:rs376292686." evidence="16">
    <original>R</original>
    <variation>C</variation>
    <location>
        <position position="95"/>
    </location>
</feature>
<feature type="sequence variant" id="VAR_012824" description="In EXT2." evidence="5">
    <original>L</original>
    <variation>R</variation>
    <location>
        <position position="152"/>
    </location>
</feature>
<feature type="sequence variant" id="VAR_012825" description="In EXT2." evidence="11">
    <original>R</original>
    <variation>S</variation>
    <location>
        <position position="179"/>
    </location>
</feature>
<feature type="sequence variant" id="VAR_012826" description="In EXT2; dbSNP:rs771803942." evidence="10">
    <original>A</original>
    <variation>V</variation>
    <location>
        <position position="202"/>
    </location>
</feature>
<feature type="sequence variant" id="VAR_012827" description="In EXT2; dbSNP:rs764379119." evidence="8">
    <original>R</original>
    <variation>P</variation>
    <location>
        <position position="223"/>
    </location>
</feature>
<feature type="sequence variant" id="VAR_002378" description="In EXT2; no effect on oligomeric complex formation with EXT1; dbSNP:rs121918280." evidence="7 9 11 14 21">
    <original>D</original>
    <variation>N</variation>
    <location>
        <position position="227"/>
    </location>
</feature>
<feature type="sequence variant" id="VAR_012828" description="In EXT2." evidence="12">
    <original>I</original>
    <variation>T</variation>
    <location>
        <position position="380"/>
    </location>
</feature>
<feature type="sequence variant" id="VAR_012829" description="In osteochondroma; dbSNP:rs373582542." evidence="12">
    <original>E</original>
    <variation>K</variation>
    <location>
        <position position="576"/>
    </location>
</feature>
<feature type="mutagenesis site" description="No effect on N-acetylglucosaminyl-proteoglycan 4-beta-glucuronosyltransferase activity." evidence="18">
    <original>R</original>
    <variation>A</variation>
    <location>
        <position position="266"/>
    </location>
</feature>
<feature type="mutagenesis site" description="Increased N-acetylglucosaminyl-proteoglycan 4-beta-glucuronosyltransferase activity. Decreased glucuronosyl-N-acetylglucosaminyl-proteoglycan 4-alpha-N-acetylglucosaminyltransferase activity." evidence="19">
    <original>Y</original>
    <variation>A</variation>
    <location>
        <position position="308"/>
    </location>
</feature>
<feature type="mutagenesis site" description="Increased N-acetylglucosaminyl-proteoglycan 4-beta-glucuronosyltransferase activity. No effect on glucuronosyl-N-acetylglucosaminyl-proteoglycan 4-alpha-N-acetylglucosaminyltransferase activity." evidence="19">
    <original>R</original>
    <variation>A</variation>
    <location>
        <position position="325"/>
    </location>
</feature>
<feature type="mutagenesis site" description="No effect on N-acetylglucosaminyl-proteoglycan 4-beta-glucuronosyltransferase activity. No effect on glucuronosyl-N-acetylglucosaminyl-proteoglycan 4-alpha-N-acetylglucosaminyltransferase activity." evidence="19">
    <original>Q</original>
    <variation>A</variation>
    <location>
        <position position="328"/>
    </location>
</feature>
<feature type="mutagenesis site" description="Decreased N-acetylglucosaminyl-proteoglycan 4-beta-glucuronosyltransferase activity. Loss of glucuronosyl-N-acetylglucosaminyl-proteoglycan 4-alpha-N-acetylglucosaminyltransferase activity." evidence="19">
    <original>D</original>
    <variation>A</variation>
    <location>
        <position position="538"/>
    </location>
</feature>
<feature type="mutagenesis site" description="Decreased glucuronosyl-N-acetylglucosaminyl-proteoglycan 4-alpha-N-acetylglucosaminyltransferase activity; when associated with N-540." evidence="18">
    <original>D</original>
    <variation>N</variation>
    <location>
        <position position="538"/>
    </location>
</feature>
<feature type="mutagenesis site" description="Increased N-acetylglucosaminyl-proteoglycan 4-beta-glucuronosyltransferase activity. Decreased glucuronosyl-N-acetylglucosaminyl-proteoglycan 4-alpha-N-acetylglucosaminyltransferase activity." evidence="19">
    <original>D</original>
    <variation>A</variation>
    <location>
        <position position="540"/>
    </location>
</feature>
<feature type="mutagenesis site" description="Decreased glucuronosyl-N-acetylglucosaminyl-proteoglycan 4-alpha-N-acetylglucosaminyltransferase activity; when associated with N-538." evidence="18">
    <original>D</original>
    <variation>N</variation>
    <location>
        <position position="540"/>
    </location>
</feature>
<feature type="mutagenesis site" description="Increased N-acetylglucosaminyl-proteoglycan 4-beta-glucuronosyltransferase activity. Loss of glucuronosyl-N-acetylglucosaminyl-proteoglycan 4-alpha-N-acetylglucosaminyltransferase activity." evidence="19">
    <original>R</original>
    <variation>A</variation>
    <location>
        <position position="569"/>
    </location>
</feature>
<feature type="mutagenesis site" description="Decreased N-acetylglucosaminyl-proteoglycan 4-beta-glucuronosyltransferase activity. Decreased glucuronosyl-N-acetylglucosaminyl-proteoglycan 4-alpha-N-acetylglucosaminyltransferase activity." evidence="19">
    <original>E</original>
    <variation>A</variation>
    <location>
        <position position="585"/>
    </location>
</feature>
<feature type="sequence conflict" description="In Ref. 5; BX648142." evidence="25" ref="5">
    <original>R</original>
    <variation>H</variation>
    <location>
        <position position="322"/>
    </location>
</feature>
<feature type="sequence conflict" description="In Ref. 4; AAB62718." evidence="25" ref="4">
    <original>G</original>
    <variation>D</variation>
    <location>
        <position position="568"/>
    </location>
</feature>
<feature type="helix" evidence="35">
    <location>
        <begin position="87"/>
        <end position="90"/>
    </location>
</feature>
<feature type="turn" evidence="36">
    <location>
        <begin position="93"/>
        <end position="96"/>
    </location>
</feature>
<feature type="strand" evidence="35">
    <location>
        <begin position="106"/>
        <end position="108"/>
    </location>
</feature>
<feature type="helix" evidence="35">
    <location>
        <begin position="128"/>
        <end position="138"/>
    </location>
</feature>
<feature type="strand" evidence="34">
    <location>
        <begin position="140"/>
        <end position="143"/>
    </location>
</feature>
<feature type="turn" evidence="35">
    <location>
        <begin position="147"/>
        <end position="149"/>
    </location>
</feature>
<feature type="strand" evidence="35">
    <location>
        <begin position="151"/>
        <end position="154"/>
    </location>
</feature>
<feature type="helix" evidence="37">
    <location>
        <begin position="162"/>
        <end position="164"/>
    </location>
</feature>
<feature type="helix" evidence="35">
    <location>
        <begin position="167"/>
        <end position="176"/>
    </location>
</feature>
<feature type="helix" evidence="35">
    <location>
        <begin position="181"/>
        <end position="183"/>
    </location>
</feature>
<feature type="strand" evidence="35">
    <location>
        <begin position="184"/>
        <end position="189"/>
    </location>
</feature>
<feature type="turn" evidence="37">
    <location>
        <begin position="196"/>
        <end position="198"/>
    </location>
</feature>
<feature type="strand" evidence="35">
    <location>
        <begin position="211"/>
        <end position="215"/>
    </location>
</feature>
<feature type="strand" evidence="35">
    <location>
        <begin position="219"/>
        <end position="221"/>
    </location>
</feature>
<feature type="turn" evidence="35">
    <location>
        <begin position="224"/>
        <end position="226"/>
    </location>
</feature>
<feature type="strand" evidence="37">
    <location>
        <begin position="227"/>
        <end position="229"/>
    </location>
</feature>
<feature type="helix" evidence="35">
    <location>
        <begin position="236"/>
        <end position="239"/>
    </location>
</feature>
<feature type="strand" evidence="35">
    <location>
        <begin position="251"/>
        <end position="257"/>
    </location>
</feature>
<feature type="helix" evidence="35">
    <location>
        <begin position="263"/>
        <end position="276"/>
    </location>
</feature>
<feature type="strand" evidence="35">
    <location>
        <begin position="278"/>
        <end position="284"/>
    </location>
</feature>
<feature type="strand" evidence="35">
    <location>
        <begin position="298"/>
        <end position="303"/>
    </location>
</feature>
<feature type="strand" evidence="35">
    <location>
        <begin position="305"/>
        <end position="307"/>
    </location>
</feature>
<feature type="helix" evidence="35">
    <location>
        <begin position="308"/>
        <end position="311"/>
    </location>
</feature>
<feature type="helix" evidence="35">
    <location>
        <begin position="312"/>
        <end position="314"/>
    </location>
</feature>
<feature type="strand" evidence="35">
    <location>
        <begin position="315"/>
        <end position="320"/>
    </location>
</feature>
<feature type="strand" evidence="35">
    <location>
        <begin position="323"/>
        <end position="326"/>
    </location>
</feature>
<feature type="helix" evidence="35">
    <location>
        <begin position="330"/>
        <end position="337"/>
    </location>
</feature>
<feature type="strand" evidence="35">
    <location>
        <begin position="340"/>
        <end position="343"/>
    </location>
</feature>
<feature type="turn" evidence="35">
    <location>
        <begin position="351"/>
        <end position="355"/>
    </location>
</feature>
<feature type="helix" evidence="35">
    <location>
        <begin position="358"/>
        <end position="360"/>
    </location>
</feature>
<feature type="helix" evidence="35">
    <location>
        <begin position="368"/>
        <end position="370"/>
    </location>
</feature>
<feature type="helix" evidence="35">
    <location>
        <begin position="373"/>
        <end position="378"/>
    </location>
</feature>
<feature type="helix" evidence="35">
    <location>
        <begin position="382"/>
        <end position="398"/>
    </location>
</feature>
<feature type="helix" evidence="35">
    <location>
        <begin position="403"/>
        <end position="418"/>
    </location>
</feature>
<feature type="helix" evidence="35">
    <location>
        <begin position="420"/>
        <end position="422"/>
    </location>
</feature>
<feature type="helix" evidence="35">
    <location>
        <begin position="427"/>
        <end position="430"/>
    </location>
</feature>
<feature type="helix" evidence="35">
    <location>
        <begin position="433"/>
        <end position="438"/>
    </location>
</feature>
<feature type="strand" evidence="37">
    <location>
        <begin position="452"/>
        <end position="454"/>
    </location>
</feature>
<feature type="strand" evidence="35">
    <location>
        <begin position="456"/>
        <end position="464"/>
    </location>
</feature>
<feature type="helix" evidence="35">
    <location>
        <begin position="466"/>
        <end position="476"/>
    </location>
</feature>
<feature type="strand" evidence="36">
    <location>
        <begin position="479"/>
        <end position="481"/>
    </location>
</feature>
<feature type="strand" evidence="35">
    <location>
        <begin position="482"/>
        <end position="489"/>
    </location>
</feature>
<feature type="strand" evidence="35">
    <location>
        <begin position="492"/>
        <end position="494"/>
    </location>
</feature>
<feature type="turn" evidence="35">
    <location>
        <begin position="499"/>
        <end position="501"/>
    </location>
</feature>
<feature type="strand" evidence="35">
    <location>
        <begin position="509"/>
        <end position="513"/>
    </location>
</feature>
<feature type="helix" evidence="35">
    <location>
        <begin position="519"/>
        <end position="523"/>
    </location>
</feature>
<feature type="strand" evidence="35">
    <location>
        <begin position="531"/>
        <end position="538"/>
    </location>
</feature>
<feature type="helix" evidence="35">
    <location>
        <begin position="546"/>
        <end position="558"/>
    </location>
</feature>
<feature type="strand" evidence="35">
    <location>
        <begin position="562"/>
        <end position="567"/>
    </location>
</feature>
<feature type="strand" evidence="35">
    <location>
        <begin position="570"/>
        <end position="574"/>
    </location>
</feature>
<feature type="turn" evidence="35">
    <location>
        <begin position="575"/>
        <end position="578"/>
    </location>
</feature>
<feature type="strand" evidence="35">
    <location>
        <begin position="579"/>
        <end position="583"/>
    </location>
</feature>
<feature type="strand" evidence="36">
    <location>
        <begin position="588"/>
        <end position="590"/>
    </location>
</feature>
<feature type="strand" evidence="35">
    <location>
        <begin position="597"/>
        <end position="601"/>
    </location>
</feature>
<feature type="helix" evidence="35">
    <location>
        <begin position="602"/>
        <end position="611"/>
    </location>
</feature>
<feature type="helix" evidence="35">
    <location>
        <begin position="616"/>
        <end position="623"/>
    </location>
</feature>
<feature type="helix" evidence="35">
    <location>
        <begin position="627"/>
        <end position="639"/>
    </location>
</feature>
<feature type="strand" evidence="35">
    <location>
        <begin position="644"/>
        <end position="648"/>
    </location>
</feature>
<feature type="helix" evidence="35">
    <location>
        <begin position="669"/>
        <end position="684"/>
    </location>
</feature>
<feature type="strand" evidence="35">
    <location>
        <begin position="695"/>
        <end position="698"/>
    </location>
</feature>
<feature type="turn" evidence="35">
    <location>
        <begin position="699"/>
        <end position="702"/>
    </location>
</feature>
<feature type="turn" evidence="35">
    <location>
        <begin position="707"/>
        <end position="709"/>
    </location>
</feature>
<feature type="sequence conflict" description="In Ref. 4; AAB62718." evidence="25" ref="4">
    <original>A</original>
    <variation>V</variation>
    <location sequence="Q93063-2">
        <position position="397"/>
    </location>
</feature>
<evidence type="ECO:0000250" key="1">
    <source>
        <dbReference type="UniProtKB" id="O77783"/>
    </source>
</evidence>
<evidence type="ECO:0000250" key="2">
    <source>
        <dbReference type="UniProtKB" id="Q9ES89"/>
    </source>
</evidence>
<evidence type="ECO:0000255" key="3"/>
<evidence type="ECO:0000269" key="4">
    <source>
    </source>
</evidence>
<evidence type="ECO:0000269" key="5">
    <source>
    </source>
</evidence>
<evidence type="ECO:0000269" key="6">
    <source>
    </source>
</evidence>
<evidence type="ECO:0000269" key="7">
    <source>
    </source>
</evidence>
<evidence type="ECO:0000269" key="8">
    <source>
    </source>
</evidence>
<evidence type="ECO:0000269" key="9">
    <source>
    </source>
</evidence>
<evidence type="ECO:0000269" key="10">
    <source>
    </source>
</evidence>
<evidence type="ECO:0000269" key="11">
    <source>
    </source>
</evidence>
<evidence type="ECO:0000269" key="12">
    <source>
    </source>
</evidence>
<evidence type="ECO:0000269" key="13">
    <source>
    </source>
</evidence>
<evidence type="ECO:0000269" key="14">
    <source>
    </source>
</evidence>
<evidence type="ECO:0000269" key="15">
    <source>
    </source>
</evidence>
<evidence type="ECO:0000269" key="16">
    <source>
    </source>
</evidence>
<evidence type="ECO:0000269" key="17">
    <source>
    </source>
</evidence>
<evidence type="ECO:0000269" key="18">
    <source>
    </source>
</evidence>
<evidence type="ECO:0000269" key="19">
    <source>
    </source>
</evidence>
<evidence type="ECO:0000269" key="20">
    <source>
    </source>
</evidence>
<evidence type="ECO:0000269" key="21">
    <source>
    </source>
</evidence>
<evidence type="ECO:0000303" key="22">
    <source>
    </source>
</evidence>
<evidence type="ECO:0000303" key="23">
    <source>
    </source>
</evidence>
<evidence type="ECO:0000303" key="24">
    <source>
    </source>
</evidence>
<evidence type="ECO:0000305" key="25"/>
<evidence type="ECO:0000305" key="26">
    <source>
    </source>
</evidence>
<evidence type="ECO:0000312" key="27">
    <source>
        <dbReference type="HGNC" id="HGNC:3513"/>
    </source>
</evidence>
<evidence type="ECO:0007744" key="28">
    <source>
        <dbReference type="PDB" id="7SCH"/>
    </source>
</evidence>
<evidence type="ECO:0007744" key="29">
    <source>
        <dbReference type="PDB" id="7SCJ"/>
    </source>
</evidence>
<evidence type="ECO:0007744" key="30">
    <source>
        <dbReference type="PDB" id="7SCK"/>
    </source>
</evidence>
<evidence type="ECO:0007744" key="31">
    <source>
        <dbReference type="PDB" id="7UQX"/>
    </source>
</evidence>
<evidence type="ECO:0007744" key="32">
    <source>
        <dbReference type="PDB" id="7UQY"/>
    </source>
</evidence>
<evidence type="ECO:0007744" key="33">
    <source>
        <dbReference type="PDB" id="7ZAY"/>
    </source>
</evidence>
<evidence type="ECO:0007829" key="34">
    <source>
        <dbReference type="PDB" id="7SCJ"/>
    </source>
</evidence>
<evidence type="ECO:0007829" key="35">
    <source>
        <dbReference type="PDB" id="7SCK"/>
    </source>
</evidence>
<evidence type="ECO:0007829" key="36">
    <source>
        <dbReference type="PDB" id="7UQY"/>
    </source>
</evidence>
<evidence type="ECO:0007829" key="37">
    <source>
        <dbReference type="PDB" id="7ZAY"/>
    </source>
</evidence>
<name>EXT2_HUMAN</name>
<reference key="1">
    <citation type="journal article" date="1996" name="Nat. Genet.">
        <title>The EXT2 multiple exostoses gene defines a family of putative tumour suppressor genes.</title>
        <authorList>
            <person name="Stickens D.J."/>
            <person name="Clines G."/>
            <person name="Burbee D.G."/>
            <person name="Ramos P."/>
            <person name="Thomas S."/>
            <person name="Hogue D."/>
            <person name="Hecht J.T."/>
            <person name="Lovett M."/>
            <person name="Evans G.A."/>
        </authorList>
    </citation>
    <scope>NUCLEOTIDE SEQUENCE [MRNA] (ISOFORM 1)</scope>
    <scope>TISSUE SPECIFICITY</scope>
    <source>
        <tissue>Brain</tissue>
    </source>
</reference>
<reference key="2">
    <citation type="journal article" date="1996" name="Hum. Mol. Genet.">
        <title>Positional cloning of a gene involved in hereditary multiple exostoses.</title>
        <authorList>
            <person name="Wuyts W."/>
            <person name="van Hul W."/>
            <person name="Wauters J."/>
            <person name="Nemtsova M."/>
            <person name="Reyniers E."/>
            <person name="van Hul E."/>
            <person name="de Boulle K."/>
            <person name="de Vries B.B.A."/>
            <person name="Hendrickx J."/>
            <person name="Herrygers I."/>
            <person name="Bossuyt P."/>
            <person name="Balemans W."/>
            <person name="Fransen E."/>
            <person name="Vits L."/>
            <person name="Coucke P."/>
            <person name="Nowak N.J."/>
            <person name="Mallet L."/>
            <person name="van den Ouweland A.M.W."/>
            <person name="McGaughran J."/>
            <person name="Halley D.J.J."/>
            <person name="Willems P.J."/>
        </authorList>
    </citation>
    <scope>NUCLEOTIDE SEQUENCE [MRNA] (ISOFORM 1)</scope>
</reference>
<reference key="3">
    <citation type="journal article" date="1997" name="Genome Res.">
        <title>The structure of the human multiple exostoses 2 gene and characterization of homologs in mouse and Caenorhabditis elegans.</title>
        <authorList>
            <person name="Clines G.A."/>
            <person name="Ashley J.A."/>
            <person name="Shah S."/>
            <person name="Lovett M."/>
        </authorList>
    </citation>
    <scope>NUCLEOTIDE SEQUENCE [GENOMIC DNA] (ISOFORM 1)</scope>
</reference>
<reference key="4">
    <citation type="journal article" date="1996" name="Prog. Nat. Sci.">
        <title>Molecular cloning of a candidate gene for hereditary multiple exostoses type II.</title>
        <authorList>
            <person name="Deng H.-X."/>
            <person name="Fan C."/>
            <person name="Xia J.H."/>
            <person name="Xu L."/>
            <person name="He X.X."/>
            <person name="Ruan Q.G."/>
            <person name="Yang Y."/>
            <person name="Huang L."/>
        </authorList>
    </citation>
    <scope>NUCLEOTIDE SEQUENCE [GENOMIC DNA] (ISOFORM 2)</scope>
</reference>
<reference key="5">
    <citation type="journal article" date="2004" name="Nat. Genet.">
        <title>Complete sequencing and characterization of 21,243 full-length human cDNAs.</title>
        <authorList>
            <person name="Ota T."/>
            <person name="Suzuki Y."/>
            <person name="Nishikawa T."/>
            <person name="Otsuki T."/>
            <person name="Sugiyama T."/>
            <person name="Irie R."/>
            <person name="Wakamatsu A."/>
            <person name="Hayashi K."/>
            <person name="Sato H."/>
            <person name="Nagai K."/>
            <person name="Kimura K."/>
            <person name="Makita H."/>
            <person name="Sekine M."/>
            <person name="Obayashi M."/>
            <person name="Nishi T."/>
            <person name="Shibahara T."/>
            <person name="Tanaka T."/>
            <person name="Ishii S."/>
            <person name="Yamamoto J."/>
            <person name="Saito K."/>
            <person name="Kawai Y."/>
            <person name="Isono Y."/>
            <person name="Nakamura Y."/>
            <person name="Nagahari K."/>
            <person name="Murakami K."/>
            <person name="Yasuda T."/>
            <person name="Iwayanagi T."/>
            <person name="Wagatsuma M."/>
            <person name="Shiratori A."/>
            <person name="Sudo H."/>
            <person name="Hosoiri T."/>
            <person name="Kaku Y."/>
            <person name="Kodaira H."/>
            <person name="Kondo H."/>
            <person name="Sugawara M."/>
            <person name="Takahashi M."/>
            <person name="Kanda K."/>
            <person name="Yokoi T."/>
            <person name="Furuya T."/>
            <person name="Kikkawa E."/>
            <person name="Omura Y."/>
            <person name="Abe K."/>
            <person name="Kamihara K."/>
            <person name="Katsuta N."/>
            <person name="Sato K."/>
            <person name="Tanikawa M."/>
            <person name="Yamazaki M."/>
            <person name="Ninomiya K."/>
            <person name="Ishibashi T."/>
            <person name="Yamashita H."/>
            <person name="Murakawa K."/>
            <person name="Fujimori K."/>
            <person name="Tanai H."/>
            <person name="Kimata M."/>
            <person name="Watanabe M."/>
            <person name="Hiraoka S."/>
            <person name="Chiba Y."/>
            <person name="Ishida S."/>
            <person name="Ono Y."/>
            <person name="Takiguchi S."/>
            <person name="Watanabe S."/>
            <person name="Yosida M."/>
            <person name="Hotuta T."/>
            <person name="Kusano J."/>
            <person name="Kanehori K."/>
            <person name="Takahashi-Fujii A."/>
            <person name="Hara H."/>
            <person name="Tanase T.-O."/>
            <person name="Nomura Y."/>
            <person name="Togiya S."/>
            <person name="Komai F."/>
            <person name="Hara R."/>
            <person name="Takeuchi K."/>
            <person name="Arita M."/>
            <person name="Imose N."/>
            <person name="Musashino K."/>
            <person name="Yuuki H."/>
            <person name="Oshima A."/>
            <person name="Sasaki N."/>
            <person name="Aotsuka S."/>
            <person name="Yoshikawa Y."/>
            <person name="Matsunawa H."/>
            <person name="Ichihara T."/>
            <person name="Shiohata N."/>
            <person name="Sano S."/>
            <person name="Moriya S."/>
            <person name="Momiyama H."/>
            <person name="Satoh N."/>
            <person name="Takami S."/>
            <person name="Terashima Y."/>
            <person name="Suzuki O."/>
            <person name="Nakagawa S."/>
            <person name="Senoh A."/>
            <person name="Mizoguchi H."/>
            <person name="Goto Y."/>
            <person name="Shimizu F."/>
            <person name="Wakebe H."/>
            <person name="Hishigaki H."/>
            <person name="Watanabe T."/>
            <person name="Sugiyama A."/>
            <person name="Takemoto M."/>
            <person name="Kawakami B."/>
            <person name="Yamazaki M."/>
            <person name="Watanabe K."/>
            <person name="Kumagai A."/>
            <person name="Itakura S."/>
            <person name="Fukuzumi Y."/>
            <person name="Fujimori Y."/>
            <person name="Komiyama M."/>
            <person name="Tashiro H."/>
            <person name="Tanigami A."/>
            <person name="Fujiwara T."/>
            <person name="Ono T."/>
            <person name="Yamada K."/>
            <person name="Fujii Y."/>
            <person name="Ozaki K."/>
            <person name="Hirao M."/>
            <person name="Ohmori Y."/>
            <person name="Kawabata A."/>
            <person name="Hikiji T."/>
            <person name="Kobatake N."/>
            <person name="Inagaki H."/>
            <person name="Ikema Y."/>
            <person name="Okamoto S."/>
            <person name="Okitani R."/>
            <person name="Kawakami T."/>
            <person name="Noguchi S."/>
            <person name="Itoh T."/>
            <person name="Shigeta K."/>
            <person name="Senba T."/>
            <person name="Matsumura K."/>
            <person name="Nakajima Y."/>
            <person name="Mizuno T."/>
            <person name="Morinaga M."/>
            <person name="Sasaki M."/>
            <person name="Togashi T."/>
            <person name="Oyama M."/>
            <person name="Hata H."/>
            <person name="Watanabe M."/>
            <person name="Komatsu T."/>
            <person name="Mizushima-Sugano J."/>
            <person name="Satoh T."/>
            <person name="Shirai Y."/>
            <person name="Takahashi Y."/>
            <person name="Nakagawa K."/>
            <person name="Okumura K."/>
            <person name="Nagase T."/>
            <person name="Nomura N."/>
            <person name="Kikuchi H."/>
            <person name="Masuho Y."/>
            <person name="Yamashita R."/>
            <person name="Nakai K."/>
            <person name="Yada T."/>
            <person name="Nakamura Y."/>
            <person name="Ohara O."/>
            <person name="Isogai T."/>
            <person name="Sugano S."/>
        </authorList>
    </citation>
    <scope>NUCLEOTIDE SEQUENCE [LARGE SCALE MRNA] (ISOFORM 1)</scope>
    <source>
        <tissue>Amygdala</tissue>
    </source>
</reference>
<reference key="6">
    <citation type="journal article" date="2007" name="BMC Genomics">
        <title>The full-ORF clone resource of the German cDNA consortium.</title>
        <authorList>
            <person name="Bechtel S."/>
            <person name="Rosenfelder H."/>
            <person name="Duda A."/>
            <person name="Schmidt C.P."/>
            <person name="Ernst U."/>
            <person name="Wellenreuther R."/>
            <person name="Mehrle A."/>
            <person name="Schuster C."/>
            <person name="Bahr A."/>
            <person name="Bloecker H."/>
            <person name="Heubner D."/>
            <person name="Hoerlein A."/>
            <person name="Michel G."/>
            <person name="Wedler H."/>
            <person name="Koehrer K."/>
            <person name="Ottenwaelder B."/>
            <person name="Poustka A."/>
            <person name="Wiemann S."/>
            <person name="Schupp I."/>
        </authorList>
    </citation>
    <scope>NUCLEOTIDE SEQUENCE [LARGE SCALE MRNA] (ISOFORM 3)</scope>
    <source>
        <tissue>Endometrial cancer</tissue>
    </source>
</reference>
<reference key="7">
    <citation type="journal article" date="2006" name="Nature">
        <title>Human chromosome 11 DNA sequence and analysis including novel gene identification.</title>
        <authorList>
            <person name="Taylor T.D."/>
            <person name="Noguchi H."/>
            <person name="Totoki Y."/>
            <person name="Toyoda A."/>
            <person name="Kuroki Y."/>
            <person name="Dewar K."/>
            <person name="Lloyd C."/>
            <person name="Itoh T."/>
            <person name="Takeda T."/>
            <person name="Kim D.-W."/>
            <person name="She X."/>
            <person name="Barlow K.F."/>
            <person name="Bloom T."/>
            <person name="Bruford E."/>
            <person name="Chang J.L."/>
            <person name="Cuomo C.A."/>
            <person name="Eichler E."/>
            <person name="FitzGerald M.G."/>
            <person name="Jaffe D.B."/>
            <person name="LaButti K."/>
            <person name="Nicol R."/>
            <person name="Park H.-S."/>
            <person name="Seaman C."/>
            <person name="Sougnez C."/>
            <person name="Yang X."/>
            <person name="Zimmer A.R."/>
            <person name="Zody M.C."/>
            <person name="Birren B.W."/>
            <person name="Nusbaum C."/>
            <person name="Fujiyama A."/>
            <person name="Hattori M."/>
            <person name="Rogers J."/>
            <person name="Lander E.S."/>
            <person name="Sakaki Y."/>
        </authorList>
    </citation>
    <scope>NUCLEOTIDE SEQUENCE [LARGE SCALE GENOMIC DNA]</scope>
</reference>
<reference key="8">
    <citation type="submission" date="2005-09" db="EMBL/GenBank/DDBJ databases">
        <authorList>
            <person name="Mural R.J."/>
            <person name="Istrail S."/>
            <person name="Sutton G.G."/>
            <person name="Florea L."/>
            <person name="Halpern A.L."/>
            <person name="Mobarry C.M."/>
            <person name="Lippert R."/>
            <person name="Walenz B."/>
            <person name="Shatkay H."/>
            <person name="Dew I."/>
            <person name="Miller J.R."/>
            <person name="Flanigan M.J."/>
            <person name="Edwards N.J."/>
            <person name="Bolanos R."/>
            <person name="Fasulo D."/>
            <person name="Halldorsson B.V."/>
            <person name="Hannenhalli S."/>
            <person name="Turner R."/>
            <person name="Yooseph S."/>
            <person name="Lu F."/>
            <person name="Nusskern D.R."/>
            <person name="Shue B.C."/>
            <person name="Zheng X.H."/>
            <person name="Zhong F."/>
            <person name="Delcher A.L."/>
            <person name="Huson D.H."/>
            <person name="Kravitz S.A."/>
            <person name="Mouchard L."/>
            <person name="Reinert K."/>
            <person name="Remington K.A."/>
            <person name="Clark A.G."/>
            <person name="Waterman M.S."/>
            <person name="Eichler E.E."/>
            <person name="Adams M.D."/>
            <person name="Hunkapiller M.W."/>
            <person name="Myers E.W."/>
            <person name="Venter J.C."/>
        </authorList>
    </citation>
    <scope>NUCLEOTIDE SEQUENCE [LARGE SCALE GENOMIC DNA]</scope>
</reference>
<reference key="9">
    <citation type="journal article" date="2004" name="Genome Res.">
        <title>The status, quality, and expansion of the NIH full-length cDNA project: the Mammalian Gene Collection (MGC).</title>
        <authorList>
            <consortium name="The MGC Project Team"/>
        </authorList>
    </citation>
    <scope>NUCLEOTIDE SEQUENCE [LARGE SCALE MRNA]</scope>
    <source>
        <tissue>Ovary</tissue>
    </source>
</reference>
<reference key="10">
    <citation type="journal article" date="2000" name="Biochem. Biophys. Res. Commun.">
        <title>Association of EXT1 and EXT2, hereditary multiple exostoses gene products, in Golgi apparatus.</title>
        <authorList>
            <person name="Kobayashi S."/>
            <person name="Morimoto K."/>
            <person name="Shimizu T."/>
            <person name="Takahashi M."/>
            <person name="Kurosawa H."/>
            <person name="Shirasawa T."/>
        </authorList>
    </citation>
    <scope>SUBUNIT</scope>
    <scope>SUBCELLULAR LOCATION</scope>
    <scope>CHARACTERIZATION OF VARIANT EXT2 ASN-227</scope>
</reference>
<reference key="11">
    <citation type="journal article" date="1999" name="Hum. Mol. Genet.">
        <title>A direct interaction between EXT proteins and glycosyltransferases is defective in hereditary multiple exostoses.</title>
        <authorList>
            <person name="Simmons A.D."/>
            <person name="Musy M.M."/>
            <person name="Lopes C.S."/>
            <person name="Hwang L.-Y."/>
            <person name="Yang Y.-P."/>
            <person name="Lovett M."/>
        </authorList>
    </citation>
    <scope>INTERACTION WITH GALNT5</scope>
</reference>
<reference key="12">
    <citation type="journal article" date="2008" name="Proc. Natl. Acad. Sci. U.S.A.">
        <title>Heparan sulfate biosynthesis enzymes EXT1 and EXT2 affect NDST1 expression and heparan sulfate sulfation.</title>
        <authorList>
            <person name="Presto J."/>
            <person name="Thuveson M."/>
            <person name="Carlsson P."/>
            <person name="Busse M."/>
            <person name="Wilen M."/>
            <person name="Eriksson I."/>
            <person name="Kusche-Gullberg M."/>
            <person name="Kjellen L."/>
        </authorList>
    </citation>
    <scope>INTERACTION WITH NDST1</scope>
</reference>
<reference key="13">
    <citation type="journal article" date="2012" name="Nat. Cell Biol.">
        <title>Syndecan-syntenin-ALIX regulates the biogenesis of exosomes.</title>
        <authorList>
            <person name="Baietti M.F."/>
            <person name="Zhang Z."/>
            <person name="Mortier E."/>
            <person name="Melchior A."/>
            <person name="Degeest G."/>
            <person name="Geeraerts A."/>
            <person name="Ivarsson Y."/>
            <person name="Depoortere F."/>
            <person name="Coomans C."/>
            <person name="Vermeiren E."/>
            <person name="Zimmermann P."/>
            <person name="David G."/>
        </authorList>
    </citation>
    <scope>FUNCTION</scope>
</reference>
<reference key="14">
    <citation type="journal article" date="2022" name="Glycobiology">
        <title>A dominant negative splice variant of the heparan sulfate biosynthesis enzyme NDST1 reduces heparan sulfate sulfation.</title>
        <authorList>
            <person name="Missaghian P."/>
            <person name="Dierker T."/>
            <person name="Khosrowabadi E."/>
            <person name="Axling F."/>
            <person name="Eriksson I."/>
            <person name="Ghanem A."/>
            <person name="Kusche-Gullberg M."/>
            <person name="Kellokumpu S."/>
            <person name="Kjellen L."/>
        </authorList>
    </citation>
    <scope>INTERACTION WITH NDST1</scope>
    <scope>SUBCELLULAR LOCATION</scope>
</reference>
<reference evidence="33" key="15">
    <citation type="journal article" date="2022" name="Nat. Commun.">
        <title>Structure of the human heparan sulfate polymerase complex EXT1-EXT2.</title>
        <authorList>
            <person name="Leisico F."/>
            <person name="Omeiri J."/>
            <person name="Le Narvor C."/>
            <person name="Beaudouin J."/>
            <person name="Hons M."/>
            <person name="Fenel D."/>
            <person name="Schoehn G."/>
            <person name="Coute Y."/>
            <person name="Bonnaffe D."/>
            <person name="Sadir R."/>
            <person name="Lortat-Jacob H."/>
            <person name="Wild R."/>
        </authorList>
    </citation>
    <scope>STRUCTURE BY ELECTRON MICROSCOPY (2.80 ANGSTROMS) OF 47-718 OF THE HEPARAN SULFATE POLYMERASE</scope>
    <scope>FUNCTION</scope>
    <scope>CATALYTIC ACTIVITY</scope>
    <scope>PATHWAY</scope>
    <scope>DISULFIDE BONDS</scope>
    <scope>GLYCOSYLATION AT ASN-637</scope>
    <scope>MUTAGENESIS OF ARG-266; ASP-538 AND ASP-540</scope>
</reference>
<reference evidence="28 29 30 31 32" key="16">
    <citation type="journal article" date="2023" name="Nat. Chem. Biol.">
        <title>Structural basis for heparan sulfate co-polymerase action by the EXT1-2 complex.</title>
        <authorList>
            <person name="Li H."/>
            <person name="Chapla D."/>
            <person name="Amos R.A."/>
            <person name="Ramiah A."/>
            <person name="Moremen K.W."/>
            <person name="Li H."/>
        </authorList>
    </citation>
    <scope>STRUCTURE BY ELECTRON MICROSCOPY (2.80 ANGSTROMS) OF 46-718 OF THE HEPARAN SULFATE POLYMERASE IN COMPLEX WITH GLYCAN BACKBONE; UDP AND MANGANESE</scope>
    <scope>FUNCTION</scope>
    <scope>CATALYTIC ACTIVITY</scope>
    <scope>COFACTOR</scope>
    <scope>PATHWAY</scope>
    <scope>DISULFIDE BONDS</scope>
    <scope>GLYCOSYLATION AT ASN-637</scope>
    <scope>MUTAGENESIS OF TYR-308; ARG-325; GLN-328; ASP-538; ASP-540; ARG-569 AND GLU-585</scope>
</reference>
<reference key="17">
    <citation type="journal article" date="2015" name="J. Med. Genet.">
        <title>Old gene, new phenotype: mutations in heparan sulfate synthesis enzyme, EXT2 leads to seizure and developmental disorder, no exostoses.</title>
        <authorList>
            <consortium name="FORGE Canada Consortium"/>
            <person name="Farhan S.M."/>
            <person name="Wang J."/>
            <person name="Robinson J.F."/>
            <person name="Prasad A.N."/>
            <person name="Rupar C.A."/>
            <person name="Siu V.M."/>
            <person name="Hegele R.A."/>
        </authorList>
    </citation>
    <scope>INVOLVEMENT IN SSMS</scope>
    <scope>VARIANTS SSMS ARG-87 AND CYS-95</scope>
    <scope>CHARACTERIZATION OF VARIANTS SSMS ARG-87 AND CYS-95</scope>
</reference>
<reference key="18">
    <citation type="journal article" date="1997" name="Am. J. Hum. Genet.">
        <title>Mutation screening of the EXT1 and EXT2 genes in patients with hereditary multiple exostoses.</title>
        <authorList>
            <person name="Philippe C."/>
            <person name="Porter D.E."/>
            <person name="Emerton M.E."/>
            <person name="Wells D.E."/>
            <person name="Simpson A.H.R.W."/>
            <person name="Monaco A.P."/>
        </authorList>
    </citation>
    <scope>VARIANT EXT2 ASN-227</scope>
</reference>
<reference key="19">
    <citation type="journal article" date="1999" name="Hum. Genet.">
        <title>Mutation analysis of hereditary multiple exostoses in the Chinese.</title>
        <authorList>
            <person name="Xu L."/>
            <person name="Xia J."/>
            <person name="Jiang H."/>
            <person name="Zhou J."/>
            <person name="Li H."/>
            <person name="Wang D."/>
            <person name="Pan Q."/>
            <person name="Long Z."/>
            <person name="Fan C."/>
            <person name="Deng H.-X."/>
        </authorList>
    </citation>
    <scope>VARIANT EXT2 ARG-152</scope>
    <scope>ALTERNATIVE SPLICING</scope>
</reference>
<reference key="20">
    <citation type="journal article" date="1999" name="J. Hum. Genet.">
        <title>Germline mutations in the EXT1 and EXT2 genes in Korean patients with hereditary multiple exostoses.</title>
        <authorList>
            <person name="Park K.J."/>
            <person name="Shin K.-H."/>
            <person name="Ku J.-L."/>
            <person name="Cho T.-J."/>
            <person name="Lee S.H."/>
            <person name="Choi I.H."/>
            <person name="Philippe C."/>
            <person name="Monaco A.P."/>
            <person name="Porter D.E."/>
            <person name="Park J.-G."/>
        </authorList>
    </citation>
    <scope>VARIANT EXT2 ARG-85</scope>
</reference>
<reference key="21">
    <citation type="journal article" date="2000" name="Hum. Mutat.">
        <title>An R223P mutation in EXT2 gene causes hereditary multiple exostoses.</title>
        <authorList>
            <person name="Shi Y.-R."/>
            <person name="Wu J.-Y."/>
            <person name="Tsai F.-J."/>
            <person name="Lee C.-C."/>
            <person name="Tsai C.-H."/>
        </authorList>
    </citation>
    <scope>VARIANT EXT2 PRO-223</scope>
</reference>
<reference key="22">
    <citation type="journal article" date="2001" name="Am. J. Med. Genet.">
        <title>Mutation frequencies of EXT1 and EXT2 in 43 Japanese families with hereditary multiple exostoses.</title>
        <authorList>
            <person name="Seki H."/>
            <person name="Kubota T."/>
            <person name="Ikegawa S."/>
            <person name="Haga N."/>
            <person name="Fujioka F."/>
            <person name="Ohzeki S."/>
            <person name="Wakui K."/>
            <person name="Yoshikawa H."/>
            <person name="Takaoka K."/>
            <person name="Fukushima Y."/>
        </authorList>
    </citation>
    <scope>VARIANT EXT2 VAL-202</scope>
</reference>
<reference key="23">
    <citation type="journal article" date="2001" name="Cell Motil. Cytoskeleton">
        <title>Diminished levels of the putative tumor suppressor proteins EXT1 and EXT2 in exostosis chondrocytes.</title>
        <authorList>
            <person name="Bernard M.A."/>
            <person name="Hall C.E."/>
            <person name="Hogue D.A."/>
            <person name="Cole W.G."/>
            <person name="Scott A."/>
            <person name="Snuggs M.B."/>
            <person name="Clines G.A."/>
            <person name="Luedecke H.-J."/>
            <person name="Lovett M."/>
            <person name="Van Winkle W.B."/>
            <person name="Hecht J.T."/>
        </authorList>
    </citation>
    <scope>VARIANT EXT2 ASN-227</scope>
</reference>
<reference key="24">
    <citation type="journal article" date="2001" name="Int. J. Cancer">
        <title>Ext-mutation analysis in Italian sporadic and hereditary osteochondromas.</title>
        <authorList>
            <person name="Gigante M."/>
            <person name="Matera M.G."/>
            <person name="Seripa D."/>
            <person name="Izzo A.M."/>
            <person name="Venanzi R."/>
            <person name="Giannotti A."/>
            <person name="Digilio M.C."/>
            <person name="Gravina C."/>
            <person name="Lazzari M."/>
            <person name="Monteleone G."/>
            <person name="Monteleone M."/>
            <person name="Dallapiccola B."/>
            <person name="Fazio V.M."/>
        </authorList>
    </citation>
    <scope>VARIANT EXT2 THR-380</scope>
    <scope>VARIANT OSTEOCHONDROMA LYS-576</scope>
</reference>
<reference key="25">
    <citation type="journal article" date="2001" name="J. Med. Genet.">
        <title>Genotype-phenotype correlation in hereditary multiple exostoses.</title>
        <authorList>
            <person name="Francannet C."/>
            <person name="Cohen-Tanugi A."/>
            <person name="Le Merrer M."/>
            <person name="Munnich A."/>
            <person name="Bonaventure J."/>
            <person name="Legeai-Mallet L."/>
        </authorList>
    </citation>
    <scope>VARIANTS EXT2 SER-179 AND ASN-227</scope>
</reference>
<reference key="26">
    <citation type="journal article" date="2009" name="Ann. Hum. Genet.">
        <title>New mutations of EXT1 and EXT2 genes in German patients with Multiple Osteochondromas.</title>
        <authorList>
            <person name="Heinritz W."/>
            <person name="Hueffmeier U."/>
            <person name="Strenge S."/>
            <person name="Miterski B."/>
            <person name="Zweier C."/>
            <person name="Leinung S."/>
            <person name="Bohring A."/>
            <person name="Mitulla B."/>
            <person name="Peters U."/>
            <person name="Froster U.G."/>
        </authorList>
    </citation>
    <scope>VARIANT EXT2 ASN-227</scope>
    <scope>FUNCTION</scope>
</reference>
<keyword id="KW-0002">3D-structure</keyword>
<keyword id="KW-0025">Alternative splicing</keyword>
<keyword id="KW-0225">Disease variant</keyword>
<keyword id="KW-1015">Disulfide bond</keyword>
<keyword id="KW-0256">Endoplasmic reticulum</keyword>
<keyword id="KW-0887">Epilepsy</keyword>
<keyword id="KW-0325">Glycoprotein</keyword>
<keyword id="KW-0328">Glycosyltransferase</keyword>
<keyword id="KW-0333">Golgi apparatus</keyword>
<keyword id="KW-0361">Hereditary multiple exostoses</keyword>
<keyword id="KW-0991">Intellectual disability</keyword>
<keyword id="KW-0464">Manganese</keyword>
<keyword id="KW-0472">Membrane</keyword>
<keyword id="KW-0479">Metal-binding</keyword>
<keyword id="KW-1267">Proteomics identification</keyword>
<keyword id="KW-1185">Reference proteome</keyword>
<keyword id="KW-0964">Secreted</keyword>
<keyword id="KW-0735">Signal-anchor</keyword>
<keyword id="KW-0808">Transferase</keyword>
<keyword id="KW-0812">Transmembrane</keyword>
<keyword id="KW-1133">Transmembrane helix</keyword>
<keyword id="KW-0043">Tumor suppressor</keyword>
<gene>
    <name evidence="27" type="primary">EXT2</name>
</gene>
<proteinExistence type="evidence at protein level"/>